<dbReference type="EC" id="2.1.1.191" evidence="1"/>
<dbReference type="EMBL" id="CP000891">
    <property type="protein sequence ID" value="ABX50677.1"/>
    <property type="molecule type" value="Genomic_DNA"/>
</dbReference>
<dbReference type="RefSeq" id="WP_006083894.1">
    <property type="nucleotide sequence ID" value="NC_009997.1"/>
</dbReference>
<dbReference type="SMR" id="A9L0P6"/>
<dbReference type="KEGG" id="sbn:Sbal195_3515"/>
<dbReference type="HOGENOM" id="CLU_014042_0_0_6"/>
<dbReference type="Proteomes" id="UP000000770">
    <property type="component" value="Chromosome"/>
</dbReference>
<dbReference type="GO" id="GO:0005737">
    <property type="term" value="C:cytoplasm"/>
    <property type="evidence" value="ECO:0007669"/>
    <property type="project" value="UniProtKB-SubCell"/>
</dbReference>
<dbReference type="GO" id="GO:0003723">
    <property type="term" value="F:RNA binding"/>
    <property type="evidence" value="ECO:0007669"/>
    <property type="project" value="UniProtKB-KW"/>
</dbReference>
<dbReference type="GO" id="GO:0016434">
    <property type="term" value="F:rRNA (cytosine) methyltransferase activity"/>
    <property type="evidence" value="ECO:0007669"/>
    <property type="project" value="UniProtKB-UniRule"/>
</dbReference>
<dbReference type="CDD" id="cd02440">
    <property type="entry name" value="AdoMet_MTases"/>
    <property type="match status" value="1"/>
</dbReference>
<dbReference type="CDD" id="cd21153">
    <property type="entry name" value="PUA_RlmI"/>
    <property type="match status" value="1"/>
</dbReference>
<dbReference type="CDD" id="cd11572">
    <property type="entry name" value="RlmI_M_like"/>
    <property type="match status" value="1"/>
</dbReference>
<dbReference type="Gene3D" id="2.30.130.10">
    <property type="entry name" value="PUA domain"/>
    <property type="match status" value="1"/>
</dbReference>
<dbReference type="Gene3D" id="3.30.750.80">
    <property type="entry name" value="RNA methyltransferase domain (HRMD) like"/>
    <property type="match status" value="1"/>
</dbReference>
<dbReference type="Gene3D" id="3.40.50.150">
    <property type="entry name" value="Vaccinia Virus protein VP39"/>
    <property type="match status" value="1"/>
</dbReference>
<dbReference type="HAMAP" id="MF_01857">
    <property type="entry name" value="23SrRNA_methyltr_I"/>
    <property type="match status" value="1"/>
</dbReference>
<dbReference type="InterPro" id="IPR002478">
    <property type="entry name" value="PUA"/>
</dbReference>
<dbReference type="InterPro" id="IPR015947">
    <property type="entry name" value="PUA-like_sf"/>
</dbReference>
<dbReference type="InterPro" id="IPR036974">
    <property type="entry name" value="PUA_sf"/>
</dbReference>
<dbReference type="InterPro" id="IPR023542">
    <property type="entry name" value="RLMI"/>
</dbReference>
<dbReference type="InterPro" id="IPR041532">
    <property type="entry name" value="RlmI-like_PUA"/>
</dbReference>
<dbReference type="InterPro" id="IPR019614">
    <property type="entry name" value="SAM-dep_methyl-trfase"/>
</dbReference>
<dbReference type="InterPro" id="IPR029063">
    <property type="entry name" value="SAM-dependent_MTases_sf"/>
</dbReference>
<dbReference type="PANTHER" id="PTHR42873">
    <property type="entry name" value="RIBOSOMAL RNA LARGE SUBUNIT METHYLTRANSFERASE"/>
    <property type="match status" value="1"/>
</dbReference>
<dbReference type="PANTHER" id="PTHR42873:SF1">
    <property type="entry name" value="S-ADENOSYLMETHIONINE-DEPENDENT METHYLTRANSFERASE DOMAIN-CONTAINING PROTEIN"/>
    <property type="match status" value="1"/>
</dbReference>
<dbReference type="Pfam" id="PF10672">
    <property type="entry name" value="Methyltrans_SAM"/>
    <property type="match status" value="1"/>
</dbReference>
<dbReference type="Pfam" id="PF17785">
    <property type="entry name" value="PUA_3"/>
    <property type="match status" value="1"/>
</dbReference>
<dbReference type="SMART" id="SM00359">
    <property type="entry name" value="PUA"/>
    <property type="match status" value="1"/>
</dbReference>
<dbReference type="SUPFAM" id="SSF88697">
    <property type="entry name" value="PUA domain-like"/>
    <property type="match status" value="1"/>
</dbReference>
<dbReference type="SUPFAM" id="SSF53335">
    <property type="entry name" value="S-adenosyl-L-methionine-dependent methyltransferases"/>
    <property type="match status" value="1"/>
</dbReference>
<dbReference type="PROSITE" id="PS50890">
    <property type="entry name" value="PUA"/>
    <property type="match status" value="1"/>
</dbReference>
<protein>
    <recommendedName>
        <fullName evidence="1">Ribosomal RNA large subunit methyltransferase I</fullName>
        <ecNumber evidence="1">2.1.1.191</ecNumber>
    </recommendedName>
    <alternativeName>
        <fullName evidence="1">23S rRNA m5C1962 methyltransferase</fullName>
    </alternativeName>
    <alternativeName>
        <fullName evidence="1">rRNA (cytosine-C(5)-)-methyltransferase RlmI</fullName>
    </alternativeName>
</protein>
<organism>
    <name type="scientific">Shewanella baltica (strain OS195)</name>
    <dbReference type="NCBI Taxonomy" id="399599"/>
    <lineage>
        <taxon>Bacteria</taxon>
        <taxon>Pseudomonadati</taxon>
        <taxon>Pseudomonadota</taxon>
        <taxon>Gammaproteobacteria</taxon>
        <taxon>Alteromonadales</taxon>
        <taxon>Shewanellaceae</taxon>
        <taxon>Shewanella</taxon>
    </lineage>
</organism>
<accession>A9L0P6</accession>
<gene>
    <name evidence="1" type="primary">rlmI</name>
    <name type="ordered locus">Sbal195_3515</name>
</gene>
<proteinExistence type="inferred from homology"/>
<keyword id="KW-0963">Cytoplasm</keyword>
<keyword id="KW-0489">Methyltransferase</keyword>
<keyword id="KW-0694">RNA-binding</keyword>
<keyword id="KW-0698">rRNA processing</keyword>
<keyword id="KW-0949">S-adenosyl-L-methionine</keyword>
<keyword id="KW-0808">Transferase</keyword>
<reference key="1">
    <citation type="submission" date="2007-11" db="EMBL/GenBank/DDBJ databases">
        <title>Complete sequence of chromosome of Shewanella baltica OS195.</title>
        <authorList>
            <consortium name="US DOE Joint Genome Institute"/>
            <person name="Copeland A."/>
            <person name="Lucas S."/>
            <person name="Lapidus A."/>
            <person name="Barry K."/>
            <person name="Glavina del Rio T."/>
            <person name="Dalin E."/>
            <person name="Tice H."/>
            <person name="Pitluck S."/>
            <person name="Chain P."/>
            <person name="Malfatti S."/>
            <person name="Shin M."/>
            <person name="Vergez L."/>
            <person name="Schmutz J."/>
            <person name="Larimer F."/>
            <person name="Land M."/>
            <person name="Hauser L."/>
            <person name="Kyrpides N."/>
            <person name="Kim E."/>
            <person name="Brettar I."/>
            <person name="Rodrigues J."/>
            <person name="Konstantinidis K."/>
            <person name="Klappenbach J."/>
            <person name="Hofle M."/>
            <person name="Tiedje J."/>
            <person name="Richardson P."/>
        </authorList>
    </citation>
    <scope>NUCLEOTIDE SEQUENCE [LARGE SCALE GENOMIC DNA]</scope>
    <source>
        <strain>OS195</strain>
    </source>
</reference>
<sequence length="396" mass="44143">MAIRIKLKPGREKSLERRHPWVFSNAIHNIKGKPEAGETVDVVAHDGHWLGRGAWSPESQIQVRIWTFDREEEIDREFFARRLQRAQIGRNDLIREQGLTGYRLVAAESDGLPGITIDRYANVLVCQLLSTGADLWRDTLVELLAEQYPDCAIYERSDVDSRKKEGLLPVTGLLHGTLPEMPVIIEENGIKIAVDVIKGHKTGFYLDQRDNRAIAARFVKDKSVLNCFCYTGTFGLYAAKAGAASIENVDVSSLALATARLNMQVNGLSDDNVHYNEADVFKLLRLYRDEGKTFDVIVLDPPKFADNKAQLNGACRGYKDINMIALQLLNPGGVLLTFSCSGLMPADLFQKIVADAALDAKREIQFIERLSQASDHPIGSAFPEGFYLKGLVARAW</sequence>
<evidence type="ECO:0000255" key="1">
    <source>
        <dbReference type="HAMAP-Rule" id="MF_01857"/>
    </source>
</evidence>
<name>RLMI_SHEB9</name>
<comment type="function">
    <text evidence="1">Specifically methylates the cytosine at position 1962 (m5C1962) of 23S rRNA.</text>
</comment>
<comment type="catalytic activity">
    <reaction evidence="1">
        <text>cytidine(1962) in 23S rRNA + S-adenosyl-L-methionine = 5-methylcytidine(1962) in 23S rRNA + S-adenosyl-L-homocysteine + H(+)</text>
        <dbReference type="Rhea" id="RHEA:42912"/>
        <dbReference type="Rhea" id="RHEA-COMP:10382"/>
        <dbReference type="Rhea" id="RHEA-COMP:10386"/>
        <dbReference type="ChEBI" id="CHEBI:15378"/>
        <dbReference type="ChEBI" id="CHEBI:57856"/>
        <dbReference type="ChEBI" id="CHEBI:59789"/>
        <dbReference type="ChEBI" id="CHEBI:74483"/>
        <dbReference type="ChEBI" id="CHEBI:82748"/>
        <dbReference type="EC" id="2.1.1.191"/>
    </reaction>
</comment>
<comment type="subcellular location">
    <subcellularLocation>
        <location evidence="1">Cytoplasm</location>
    </subcellularLocation>
</comment>
<comment type="similarity">
    <text evidence="1">Belongs to the methyltransferase superfamily. RlmI family.</text>
</comment>
<feature type="chain" id="PRO_0000366257" description="Ribosomal RNA large subunit methyltransferase I">
    <location>
        <begin position="1"/>
        <end position="396"/>
    </location>
</feature>
<feature type="domain" description="PUA" evidence="1">
    <location>
        <begin position="2"/>
        <end position="79"/>
    </location>
</feature>